<comment type="function">
    <text evidence="4">Involved in the first step of essential amino acids lysine, threonine, methionine and isoleucine synthesis via the aspartate-family pathway.</text>
</comment>
<comment type="catalytic activity">
    <reaction>
        <text>L-aspartate + ATP = 4-phospho-L-aspartate + ADP</text>
        <dbReference type="Rhea" id="RHEA:23776"/>
        <dbReference type="ChEBI" id="CHEBI:29991"/>
        <dbReference type="ChEBI" id="CHEBI:30616"/>
        <dbReference type="ChEBI" id="CHEBI:57535"/>
        <dbReference type="ChEBI" id="CHEBI:456216"/>
        <dbReference type="EC" id="2.7.2.4"/>
    </reaction>
</comment>
<comment type="activity regulation">
    <text evidence="5">Allosterically inhibited by lysine, but not by S-adenosyl-L-methionine (SAM). K(0.5) for lysine in the presence of physiological concentrations of substrates is 7.4 uM. No inhibition by threonine or leucine and no activation or inhibition by alanine, cysteine, isoleucine, serine, valine, methionine, glutamine, asparagine, glutamic acid or arginine.</text>
</comment>
<comment type="biophysicochemical properties">
    <kinetics>
        <KM evidence="5">560 uM for ATP</KM>
        <KM evidence="5">1095 uM for aspartate</KM>
        <text>K(cat) is 8.4/sec.</text>
    </kinetics>
</comment>
<comment type="pathway">
    <text>Amino-acid biosynthesis; L-lysine biosynthesis via DAP pathway; (S)-tetrahydrodipicolinate from L-aspartate: step 1/4.</text>
</comment>
<comment type="pathway">
    <text>Amino-acid biosynthesis; L-methionine biosynthesis via de novo pathway; L-homoserine from L-aspartate: step 1/3.</text>
</comment>
<comment type="pathway">
    <text>Amino-acid biosynthesis; L-threonine biosynthesis; L-threonine from L-aspartate: step 1/5.</text>
</comment>
<comment type="subcellular location">
    <subcellularLocation>
        <location evidence="6">Plastid</location>
        <location evidence="6">Chloroplast</location>
    </subcellularLocation>
</comment>
<comment type="tissue specificity">
    <text evidence="4">Highly expressed in xylem of leaves and hypocotyls, stele of roots and in trichomes after bolting. Weak expression in veins and mesophyll cells of caulone leaves, inflorescence stems, sepals, petals and stigmata.</text>
</comment>
<comment type="similarity">
    <text evidence="6">Belongs to the aspartokinase family.</text>
</comment>
<keyword id="KW-0028">Amino-acid biosynthesis</keyword>
<keyword id="KW-0067">ATP-binding</keyword>
<keyword id="KW-0150">Chloroplast</keyword>
<keyword id="KW-0418">Kinase</keyword>
<keyword id="KW-0547">Nucleotide-binding</keyword>
<keyword id="KW-0934">Plastid</keyword>
<keyword id="KW-1185">Reference proteome</keyword>
<keyword id="KW-0677">Repeat</keyword>
<keyword id="KW-0791">Threonine biosynthesis</keyword>
<keyword id="KW-0808">Transferase</keyword>
<keyword id="KW-0809">Transit peptide</keyword>
<feature type="transit peptide" description="Chloroplast" evidence="2">
    <location>
        <begin position="1"/>
        <end position="85"/>
    </location>
</feature>
<feature type="chain" id="PRO_0000248159" description="Aspartokinase 3, chloroplastic">
    <location>
        <begin position="86"/>
        <end position="559"/>
    </location>
</feature>
<feature type="domain" description="ACT 1" evidence="3">
    <location>
        <begin position="402"/>
        <end position="480"/>
    </location>
</feature>
<feature type="domain" description="ACT 2" evidence="3">
    <location>
        <begin position="481"/>
        <end position="559"/>
    </location>
</feature>
<feature type="binding site" evidence="1">
    <location>
        <position position="88"/>
    </location>
    <ligand>
        <name>ATP</name>
        <dbReference type="ChEBI" id="CHEBI:30616"/>
    </ligand>
</feature>
<feature type="binding site" evidence="1">
    <location>
        <position position="91"/>
    </location>
    <ligand>
        <name>ATP</name>
        <dbReference type="ChEBI" id="CHEBI:30616"/>
    </ligand>
</feature>
<feature type="binding site" evidence="1">
    <location>
        <position position="120"/>
    </location>
    <ligand>
        <name>ATP</name>
        <dbReference type="ChEBI" id="CHEBI:30616"/>
    </ligand>
</feature>
<feature type="binding site" evidence="1">
    <location>
        <position position="204"/>
    </location>
    <ligand>
        <name>substrate</name>
    </ligand>
</feature>
<dbReference type="EC" id="2.7.2.4"/>
<dbReference type="EMBL" id="AC010797">
    <property type="protein sequence ID" value="AAF03452.1"/>
    <property type="molecule type" value="Genomic_DNA"/>
</dbReference>
<dbReference type="EMBL" id="AC011664">
    <property type="protein sequence ID" value="AAF14833.1"/>
    <property type="molecule type" value="Genomic_DNA"/>
</dbReference>
<dbReference type="EMBL" id="CP002686">
    <property type="protein sequence ID" value="AEE73750.1"/>
    <property type="molecule type" value="Genomic_DNA"/>
</dbReference>
<dbReference type="EMBL" id="AY088366">
    <property type="protein sequence ID" value="AAM65905.1"/>
    <property type="molecule type" value="mRNA"/>
</dbReference>
<dbReference type="EMBL" id="AK226200">
    <property type="protein sequence ID" value="BAE98365.1"/>
    <property type="molecule type" value="mRNA"/>
</dbReference>
<dbReference type="RefSeq" id="NP_186851.1">
    <property type="nucleotide sequence ID" value="NM_111068.4"/>
</dbReference>
<dbReference type="SMR" id="Q9S702"/>
<dbReference type="FunCoup" id="Q9S702">
    <property type="interactions" value="630"/>
</dbReference>
<dbReference type="STRING" id="3702.Q9S702"/>
<dbReference type="PaxDb" id="3702-AT3G02020.1"/>
<dbReference type="ProteomicsDB" id="244723"/>
<dbReference type="EnsemblPlants" id="AT3G02020.1">
    <property type="protein sequence ID" value="AT3G02020.1"/>
    <property type="gene ID" value="AT3G02020"/>
</dbReference>
<dbReference type="GeneID" id="821287"/>
<dbReference type="Gramene" id="AT3G02020.1">
    <property type="protein sequence ID" value="AT3G02020.1"/>
    <property type="gene ID" value="AT3G02020"/>
</dbReference>
<dbReference type="KEGG" id="ath:AT3G02020"/>
<dbReference type="Araport" id="AT3G02020"/>
<dbReference type="TAIR" id="AT3G02020">
    <property type="gene designation" value="AK3"/>
</dbReference>
<dbReference type="eggNOG" id="KOG0456">
    <property type="taxonomic scope" value="Eukaryota"/>
</dbReference>
<dbReference type="HOGENOM" id="CLU_009116_6_1_1"/>
<dbReference type="InParanoid" id="Q9S702"/>
<dbReference type="OMA" id="THWEQEN"/>
<dbReference type="PhylomeDB" id="Q9S702"/>
<dbReference type="BioCyc" id="ARA:AT3G02020-MONOMER"/>
<dbReference type="BioCyc" id="MetaCyc:AT3G02020-MONOMER"/>
<dbReference type="BRENDA" id="2.7.2.4">
    <property type="organism ID" value="399"/>
</dbReference>
<dbReference type="SABIO-RK" id="Q9S702"/>
<dbReference type="UniPathway" id="UPA00034">
    <property type="reaction ID" value="UER00015"/>
</dbReference>
<dbReference type="UniPathway" id="UPA00050">
    <property type="reaction ID" value="UER00461"/>
</dbReference>
<dbReference type="UniPathway" id="UPA00051">
    <property type="reaction ID" value="UER00462"/>
</dbReference>
<dbReference type="PRO" id="PR:Q9S702"/>
<dbReference type="Proteomes" id="UP000006548">
    <property type="component" value="Chromosome 3"/>
</dbReference>
<dbReference type="ExpressionAtlas" id="Q9S702">
    <property type="expression patterns" value="baseline and differential"/>
</dbReference>
<dbReference type="GO" id="GO:0009507">
    <property type="term" value="C:chloroplast"/>
    <property type="evidence" value="ECO:0007669"/>
    <property type="project" value="UniProtKB-SubCell"/>
</dbReference>
<dbReference type="GO" id="GO:0004072">
    <property type="term" value="F:aspartate kinase activity"/>
    <property type="evidence" value="ECO:0007669"/>
    <property type="project" value="UniProtKB-EC"/>
</dbReference>
<dbReference type="GO" id="GO:0005524">
    <property type="term" value="F:ATP binding"/>
    <property type="evidence" value="ECO:0007669"/>
    <property type="project" value="UniProtKB-KW"/>
</dbReference>
<dbReference type="GO" id="GO:0009089">
    <property type="term" value="P:lysine biosynthetic process via diaminopimelate"/>
    <property type="evidence" value="ECO:0007669"/>
    <property type="project" value="UniProtKB-UniPathway"/>
</dbReference>
<dbReference type="GO" id="GO:0009088">
    <property type="term" value="P:threonine biosynthetic process"/>
    <property type="evidence" value="ECO:0007669"/>
    <property type="project" value="UniProtKB-UniPathway"/>
</dbReference>
<dbReference type="FunFam" id="1.20.120.1320:FF:000001">
    <property type="entry name" value="Aspartokinase"/>
    <property type="match status" value="1"/>
</dbReference>
<dbReference type="FunFam" id="3.30.70.260:FF:000016">
    <property type="entry name" value="Aspartokinase"/>
    <property type="match status" value="1"/>
</dbReference>
<dbReference type="FunFam" id="3.40.1160.10:FF:000012">
    <property type="entry name" value="Aspartokinase"/>
    <property type="match status" value="1"/>
</dbReference>
<dbReference type="FunFam" id="3.30.70.260:FF:000020">
    <property type="entry name" value="Aspartokinase 1"/>
    <property type="match status" value="1"/>
</dbReference>
<dbReference type="Gene3D" id="3.30.70.260">
    <property type="match status" value="2"/>
</dbReference>
<dbReference type="Gene3D" id="3.40.1160.10">
    <property type="entry name" value="Acetylglutamate kinase-like"/>
    <property type="match status" value="1"/>
</dbReference>
<dbReference type="Gene3D" id="1.20.120.1320">
    <property type="entry name" value="Aspartokinase, catalytic domain"/>
    <property type="match status" value="1"/>
</dbReference>
<dbReference type="InterPro" id="IPR036393">
    <property type="entry name" value="AceGlu_kinase-like_sf"/>
</dbReference>
<dbReference type="InterPro" id="IPR045865">
    <property type="entry name" value="ACT-like_dom_sf"/>
</dbReference>
<dbReference type="InterPro" id="IPR054352">
    <property type="entry name" value="ACT_Aspartokinase"/>
</dbReference>
<dbReference type="InterPro" id="IPR002912">
    <property type="entry name" value="ACT_dom"/>
</dbReference>
<dbReference type="InterPro" id="IPR001048">
    <property type="entry name" value="Asp/Glu/Uridylate_kinase"/>
</dbReference>
<dbReference type="InterPro" id="IPR001341">
    <property type="entry name" value="Asp_kinase"/>
</dbReference>
<dbReference type="InterPro" id="IPR042199">
    <property type="entry name" value="AsparK_Bifunc_asparK/hSer_DH"/>
</dbReference>
<dbReference type="InterPro" id="IPR018042">
    <property type="entry name" value="Aspartate_kinase_CS"/>
</dbReference>
<dbReference type="NCBIfam" id="TIGR00657">
    <property type="entry name" value="asp_kinases"/>
    <property type="match status" value="1"/>
</dbReference>
<dbReference type="PANTHER" id="PTHR21499">
    <property type="entry name" value="ASPARTATE KINASE"/>
    <property type="match status" value="1"/>
</dbReference>
<dbReference type="PANTHER" id="PTHR21499:SF59">
    <property type="entry name" value="ASPARTOKINASE"/>
    <property type="match status" value="1"/>
</dbReference>
<dbReference type="Pfam" id="PF00696">
    <property type="entry name" value="AA_kinase"/>
    <property type="match status" value="1"/>
</dbReference>
<dbReference type="Pfam" id="PF22468">
    <property type="entry name" value="ACT_9"/>
    <property type="match status" value="1"/>
</dbReference>
<dbReference type="SUPFAM" id="SSF55021">
    <property type="entry name" value="ACT-like"/>
    <property type="match status" value="2"/>
</dbReference>
<dbReference type="SUPFAM" id="SSF53633">
    <property type="entry name" value="Carbamate kinase-like"/>
    <property type="match status" value="1"/>
</dbReference>
<dbReference type="PROSITE" id="PS51671">
    <property type="entry name" value="ACT"/>
    <property type="match status" value="1"/>
</dbReference>
<dbReference type="PROSITE" id="PS00324">
    <property type="entry name" value="ASPARTOKINASE"/>
    <property type="match status" value="1"/>
</dbReference>
<accession>Q9S702</accession>
<proteinExistence type="evidence at protein level"/>
<gene>
    <name type="primary">AK3</name>
    <name type="synonym">AK-LYS3</name>
    <name type="ordered locus">At3g02020</name>
    <name type="ORF">F1C9.20</name>
    <name type="ORF">F28J7.35</name>
</gene>
<protein>
    <recommendedName>
        <fullName>Aspartokinase 3, chloroplastic</fullName>
        <ecNumber>2.7.2.4</ecNumber>
    </recommendedName>
    <alternativeName>
        <fullName>Aspartate kinase 3</fullName>
    </alternativeName>
</protein>
<name>AK3_ARATH</name>
<reference key="1">
    <citation type="journal article" date="2001" name="Genes Genet. Syst.">
        <title>Identification of a monofunctional aspartate kinase gene of Arabidopsis thaliana with spatially and temporally regulated expression.</title>
        <authorList>
            <person name="Yoshioka Y."/>
            <person name="Kurei S."/>
            <person name="Machida Y."/>
        </authorList>
    </citation>
    <scope>NUCLEOTIDE SEQUENCE [MRNA]</scope>
    <scope>FUNCTION</scope>
    <scope>TISSUE SPECIFICITY</scope>
</reference>
<reference key="2">
    <citation type="journal article" date="2000" name="Nature">
        <title>Sequence and analysis of chromosome 3 of the plant Arabidopsis thaliana.</title>
        <authorList>
            <person name="Salanoubat M."/>
            <person name="Lemcke K."/>
            <person name="Rieger M."/>
            <person name="Ansorge W."/>
            <person name="Unseld M."/>
            <person name="Fartmann B."/>
            <person name="Valle G."/>
            <person name="Bloecker H."/>
            <person name="Perez-Alonso M."/>
            <person name="Obermaier B."/>
            <person name="Delseny M."/>
            <person name="Boutry M."/>
            <person name="Grivell L.A."/>
            <person name="Mache R."/>
            <person name="Puigdomenech P."/>
            <person name="De Simone V."/>
            <person name="Choisne N."/>
            <person name="Artiguenave F."/>
            <person name="Robert C."/>
            <person name="Brottier P."/>
            <person name="Wincker P."/>
            <person name="Cattolico L."/>
            <person name="Weissenbach J."/>
            <person name="Saurin W."/>
            <person name="Quetier F."/>
            <person name="Schaefer M."/>
            <person name="Mueller-Auer S."/>
            <person name="Gabel C."/>
            <person name="Fuchs M."/>
            <person name="Benes V."/>
            <person name="Wurmbach E."/>
            <person name="Drzonek H."/>
            <person name="Erfle H."/>
            <person name="Jordan N."/>
            <person name="Bangert S."/>
            <person name="Wiedelmann R."/>
            <person name="Kranz H."/>
            <person name="Voss H."/>
            <person name="Holland R."/>
            <person name="Brandt P."/>
            <person name="Nyakatura G."/>
            <person name="Vezzi A."/>
            <person name="D'Angelo M."/>
            <person name="Pallavicini A."/>
            <person name="Toppo S."/>
            <person name="Simionati B."/>
            <person name="Conrad A."/>
            <person name="Hornischer K."/>
            <person name="Kauer G."/>
            <person name="Loehnert T.-H."/>
            <person name="Nordsiek G."/>
            <person name="Reichelt J."/>
            <person name="Scharfe M."/>
            <person name="Schoen O."/>
            <person name="Bargues M."/>
            <person name="Terol J."/>
            <person name="Climent J."/>
            <person name="Navarro P."/>
            <person name="Collado C."/>
            <person name="Perez-Perez A."/>
            <person name="Ottenwaelder B."/>
            <person name="Duchemin D."/>
            <person name="Cooke R."/>
            <person name="Laudie M."/>
            <person name="Berger-Llauro C."/>
            <person name="Purnelle B."/>
            <person name="Masuy D."/>
            <person name="de Haan M."/>
            <person name="Maarse A.C."/>
            <person name="Alcaraz J.-P."/>
            <person name="Cottet A."/>
            <person name="Casacuberta E."/>
            <person name="Monfort A."/>
            <person name="Argiriou A."/>
            <person name="Flores M."/>
            <person name="Liguori R."/>
            <person name="Vitale D."/>
            <person name="Mannhaupt G."/>
            <person name="Haase D."/>
            <person name="Schoof H."/>
            <person name="Rudd S."/>
            <person name="Zaccaria P."/>
            <person name="Mewes H.-W."/>
            <person name="Mayer K.F.X."/>
            <person name="Kaul S."/>
            <person name="Town C.D."/>
            <person name="Koo H.L."/>
            <person name="Tallon L.J."/>
            <person name="Jenkins J."/>
            <person name="Rooney T."/>
            <person name="Rizzo M."/>
            <person name="Walts A."/>
            <person name="Utterback T."/>
            <person name="Fujii C.Y."/>
            <person name="Shea T.P."/>
            <person name="Creasy T.H."/>
            <person name="Haas B."/>
            <person name="Maiti R."/>
            <person name="Wu D."/>
            <person name="Peterson J."/>
            <person name="Van Aken S."/>
            <person name="Pai G."/>
            <person name="Militscher J."/>
            <person name="Sellers P."/>
            <person name="Gill J.E."/>
            <person name="Feldblyum T.V."/>
            <person name="Preuss D."/>
            <person name="Lin X."/>
            <person name="Nierman W.C."/>
            <person name="Salzberg S.L."/>
            <person name="White O."/>
            <person name="Venter J.C."/>
            <person name="Fraser C.M."/>
            <person name="Kaneko T."/>
            <person name="Nakamura Y."/>
            <person name="Sato S."/>
            <person name="Kato T."/>
            <person name="Asamizu E."/>
            <person name="Sasamoto S."/>
            <person name="Kimura T."/>
            <person name="Idesawa K."/>
            <person name="Kawashima K."/>
            <person name="Kishida Y."/>
            <person name="Kiyokawa C."/>
            <person name="Kohara M."/>
            <person name="Matsumoto M."/>
            <person name="Matsuno A."/>
            <person name="Muraki A."/>
            <person name="Nakayama S."/>
            <person name="Nakazaki N."/>
            <person name="Shinpo S."/>
            <person name="Takeuchi C."/>
            <person name="Wada T."/>
            <person name="Watanabe A."/>
            <person name="Yamada M."/>
            <person name="Yasuda M."/>
            <person name="Tabata S."/>
        </authorList>
    </citation>
    <scope>NUCLEOTIDE SEQUENCE [LARGE SCALE GENOMIC DNA]</scope>
    <source>
        <strain>cv. Columbia</strain>
    </source>
</reference>
<reference key="3">
    <citation type="journal article" date="2017" name="Plant J.">
        <title>Araport11: a complete reannotation of the Arabidopsis thaliana reference genome.</title>
        <authorList>
            <person name="Cheng C.Y."/>
            <person name="Krishnakumar V."/>
            <person name="Chan A.P."/>
            <person name="Thibaud-Nissen F."/>
            <person name="Schobel S."/>
            <person name="Town C.D."/>
        </authorList>
    </citation>
    <scope>GENOME REANNOTATION</scope>
    <source>
        <strain>cv. Columbia</strain>
    </source>
</reference>
<reference key="4">
    <citation type="submission" date="2002-03" db="EMBL/GenBank/DDBJ databases">
        <title>Full-length cDNA from Arabidopsis thaliana.</title>
        <authorList>
            <person name="Brover V.V."/>
            <person name="Troukhan M.E."/>
            <person name="Alexandrov N.A."/>
            <person name="Lu Y.-P."/>
            <person name="Flavell R.B."/>
            <person name="Feldmann K.A."/>
        </authorList>
    </citation>
    <scope>NUCLEOTIDE SEQUENCE [LARGE SCALE MRNA]</scope>
</reference>
<reference key="5">
    <citation type="submission" date="2006-07" db="EMBL/GenBank/DDBJ databases">
        <title>Large-scale analysis of RIKEN Arabidopsis full-length (RAFL) cDNAs.</title>
        <authorList>
            <person name="Totoki Y."/>
            <person name="Seki M."/>
            <person name="Ishida J."/>
            <person name="Nakajima M."/>
            <person name="Enju A."/>
            <person name="Kamiya A."/>
            <person name="Narusaka M."/>
            <person name="Shin-i T."/>
            <person name="Nakagawa M."/>
            <person name="Sakamoto N."/>
            <person name="Oishi K."/>
            <person name="Kohara Y."/>
            <person name="Kobayashi M."/>
            <person name="Toyoda A."/>
            <person name="Sakaki Y."/>
            <person name="Sakurai T."/>
            <person name="Iida K."/>
            <person name="Akiyama K."/>
            <person name="Satou M."/>
            <person name="Toyoda T."/>
            <person name="Konagaya A."/>
            <person name="Carninci P."/>
            <person name="Kawai J."/>
            <person name="Hayashizaki Y."/>
            <person name="Shinozaki K."/>
        </authorList>
    </citation>
    <scope>NUCLEOTIDE SEQUENCE [LARGE SCALE MRNA]</scope>
    <source>
        <strain>cv. Columbia</strain>
    </source>
</reference>
<reference key="6">
    <citation type="journal article" date="2007" name="FEBS J.">
        <title>Allosteric monofunctional aspartate kinases from Arabidopsis.</title>
        <authorList>
            <person name="Curien G."/>
            <person name="Laurencin M."/>
            <person name="Robert-Genthon M."/>
            <person name="Dumas R."/>
        </authorList>
    </citation>
    <scope>BIOPHYSICOCHEMICAL PROPERTIES</scope>
    <scope>ACTIVITY REGULATION</scope>
</reference>
<sequence length="559" mass="61216">MAASMQFYGVKTPELALNSKRIEFSSKGLNFSALVSSARVFSRNVDRSCKNIALRVTCEAGRVELLERKASETFKLNKTEKKLTCVMKFGGSSVASAERMIQVAKLILSFPDEKPVVVLSAMAKTTNKLLMAGEKAVCCGVTNVDTIEELSYIKELHIRTAHELGVETAVIAEHLEGLEQLLKGVAMMKELTLRSRDYLVSFGECMSTRLFAAYLNKIGHKARQYDAFEIGIITTDDFTNADILEATYPAVSKKLLGDWSKENALPVVTGFLGKGWRSCAVTTLGRGGSDLTATTIGKALGLREIQVWKDVDGVLTCDPNIYCGAQPVPHLTFDEAAELAYFGAQVLHPLSMRPAREGNIPVRVKNSYNPTAPGTVITRSRDMSKAVLTSIVLKRNVTMLDITSTRMLGQYGFLAKVFSTFEKLGISVDVVATSEVSISLTLDPSKFCSRELIQHELDQVVEELEKIAVVNLLRHRSIISLIGNVQRSSFILEKGFRVLRTNGINVQMISQGASKVNISLIVNDDEAEHCVKALHSAFFETDTCEAVSECPTGYIAASS</sequence>
<evidence type="ECO:0000250" key="1"/>
<evidence type="ECO:0000255" key="2"/>
<evidence type="ECO:0000255" key="3">
    <source>
        <dbReference type="PROSITE-ProRule" id="PRU01007"/>
    </source>
</evidence>
<evidence type="ECO:0000269" key="4">
    <source>
    </source>
</evidence>
<evidence type="ECO:0000269" key="5">
    <source>
    </source>
</evidence>
<evidence type="ECO:0000305" key="6"/>
<organism>
    <name type="scientific">Arabidopsis thaliana</name>
    <name type="common">Mouse-ear cress</name>
    <dbReference type="NCBI Taxonomy" id="3702"/>
    <lineage>
        <taxon>Eukaryota</taxon>
        <taxon>Viridiplantae</taxon>
        <taxon>Streptophyta</taxon>
        <taxon>Embryophyta</taxon>
        <taxon>Tracheophyta</taxon>
        <taxon>Spermatophyta</taxon>
        <taxon>Magnoliopsida</taxon>
        <taxon>eudicotyledons</taxon>
        <taxon>Gunneridae</taxon>
        <taxon>Pentapetalae</taxon>
        <taxon>rosids</taxon>
        <taxon>malvids</taxon>
        <taxon>Brassicales</taxon>
        <taxon>Brassicaceae</taxon>
        <taxon>Camelineae</taxon>
        <taxon>Arabidopsis</taxon>
    </lineage>
</organism>